<sequence>MENAFKLLYKTIEERKESPLPESYTNYLFSKGEDKILKKIGEECAEVIIACKNNDKEEVVKEMVDVFYHCFVLLAEKNIALEDVMREVKERNGKLSRVGDRREIDTL</sequence>
<proteinExistence type="inferred from homology"/>
<reference key="1">
    <citation type="submission" date="2008-10" db="EMBL/GenBank/DDBJ databases">
        <title>Genome sequence of Bacillus cereus B4264.</title>
        <authorList>
            <person name="Dodson R.J."/>
            <person name="Durkin A.S."/>
            <person name="Rosovitz M.J."/>
            <person name="Rasko D.A."/>
            <person name="Hoffmaster A."/>
            <person name="Ravel J."/>
            <person name="Sutton G."/>
        </authorList>
    </citation>
    <scope>NUCLEOTIDE SEQUENCE [LARGE SCALE GENOMIC DNA]</scope>
    <source>
        <strain>B4264</strain>
    </source>
</reference>
<gene>
    <name evidence="1" type="primary">hisE</name>
    <name type="ordered locus">BCB4264_A1465</name>
</gene>
<protein>
    <recommendedName>
        <fullName evidence="1">Phosphoribosyl-ATP pyrophosphatase</fullName>
        <shortName evidence="1">PRA-PH</shortName>
        <ecNumber evidence="1">3.6.1.31</ecNumber>
    </recommendedName>
</protein>
<evidence type="ECO:0000255" key="1">
    <source>
        <dbReference type="HAMAP-Rule" id="MF_01020"/>
    </source>
</evidence>
<comment type="catalytic activity">
    <reaction evidence="1">
        <text>1-(5-phospho-beta-D-ribosyl)-ATP + H2O = 1-(5-phospho-beta-D-ribosyl)-5'-AMP + diphosphate + H(+)</text>
        <dbReference type="Rhea" id="RHEA:22828"/>
        <dbReference type="ChEBI" id="CHEBI:15377"/>
        <dbReference type="ChEBI" id="CHEBI:15378"/>
        <dbReference type="ChEBI" id="CHEBI:33019"/>
        <dbReference type="ChEBI" id="CHEBI:59457"/>
        <dbReference type="ChEBI" id="CHEBI:73183"/>
        <dbReference type="EC" id="3.6.1.31"/>
    </reaction>
</comment>
<comment type="pathway">
    <text evidence="1">Amino-acid biosynthesis; L-histidine biosynthesis; L-histidine from 5-phospho-alpha-D-ribose 1-diphosphate: step 2/9.</text>
</comment>
<comment type="subcellular location">
    <subcellularLocation>
        <location evidence="1">Cytoplasm</location>
    </subcellularLocation>
</comment>
<comment type="similarity">
    <text evidence="1">Belongs to the PRA-PH family.</text>
</comment>
<feature type="chain" id="PRO_1000135299" description="Phosphoribosyl-ATP pyrophosphatase">
    <location>
        <begin position="1"/>
        <end position="107"/>
    </location>
</feature>
<dbReference type="EC" id="3.6.1.31" evidence="1"/>
<dbReference type="EMBL" id="CP001176">
    <property type="protein sequence ID" value="ACK61594.1"/>
    <property type="molecule type" value="Genomic_DNA"/>
</dbReference>
<dbReference type="RefSeq" id="WP_000426355.1">
    <property type="nucleotide sequence ID" value="NC_011725.1"/>
</dbReference>
<dbReference type="SMR" id="B7HHG7"/>
<dbReference type="GeneID" id="72448177"/>
<dbReference type="KEGG" id="bcb:BCB4264_A1465"/>
<dbReference type="HOGENOM" id="CLU_123337_0_0_9"/>
<dbReference type="UniPathway" id="UPA00031">
    <property type="reaction ID" value="UER00007"/>
</dbReference>
<dbReference type="Proteomes" id="UP000007096">
    <property type="component" value="Chromosome"/>
</dbReference>
<dbReference type="GO" id="GO:0005737">
    <property type="term" value="C:cytoplasm"/>
    <property type="evidence" value="ECO:0007669"/>
    <property type="project" value="UniProtKB-SubCell"/>
</dbReference>
<dbReference type="GO" id="GO:0005524">
    <property type="term" value="F:ATP binding"/>
    <property type="evidence" value="ECO:0007669"/>
    <property type="project" value="UniProtKB-KW"/>
</dbReference>
<dbReference type="GO" id="GO:0004636">
    <property type="term" value="F:phosphoribosyl-ATP diphosphatase activity"/>
    <property type="evidence" value="ECO:0007669"/>
    <property type="project" value="UniProtKB-UniRule"/>
</dbReference>
<dbReference type="GO" id="GO:0000105">
    <property type="term" value="P:L-histidine biosynthetic process"/>
    <property type="evidence" value="ECO:0007669"/>
    <property type="project" value="UniProtKB-UniRule"/>
</dbReference>
<dbReference type="CDD" id="cd11534">
    <property type="entry name" value="NTP-PPase_HisIE_like"/>
    <property type="match status" value="1"/>
</dbReference>
<dbReference type="Gene3D" id="1.10.287.1080">
    <property type="entry name" value="MazG-like"/>
    <property type="match status" value="1"/>
</dbReference>
<dbReference type="HAMAP" id="MF_01020">
    <property type="entry name" value="HisE"/>
    <property type="match status" value="1"/>
</dbReference>
<dbReference type="InterPro" id="IPR008179">
    <property type="entry name" value="HisE"/>
</dbReference>
<dbReference type="InterPro" id="IPR021130">
    <property type="entry name" value="PRib-ATP_PPHydrolase-like"/>
</dbReference>
<dbReference type="NCBIfam" id="TIGR03188">
    <property type="entry name" value="histidine_hisI"/>
    <property type="match status" value="1"/>
</dbReference>
<dbReference type="NCBIfam" id="NF001611">
    <property type="entry name" value="PRK00400.1-3"/>
    <property type="match status" value="1"/>
</dbReference>
<dbReference type="PANTHER" id="PTHR42945">
    <property type="entry name" value="HISTIDINE BIOSYNTHESIS BIFUNCTIONAL PROTEIN"/>
    <property type="match status" value="1"/>
</dbReference>
<dbReference type="PANTHER" id="PTHR42945:SF9">
    <property type="entry name" value="HISTIDINE BIOSYNTHESIS BIFUNCTIONAL PROTEIN HISIE"/>
    <property type="match status" value="1"/>
</dbReference>
<dbReference type="Pfam" id="PF01503">
    <property type="entry name" value="PRA-PH"/>
    <property type="match status" value="1"/>
</dbReference>
<dbReference type="SUPFAM" id="SSF101386">
    <property type="entry name" value="all-alpha NTP pyrophosphatases"/>
    <property type="match status" value="1"/>
</dbReference>
<name>HIS2_BACC4</name>
<accession>B7HHG7</accession>
<organism>
    <name type="scientific">Bacillus cereus (strain B4264)</name>
    <dbReference type="NCBI Taxonomy" id="405532"/>
    <lineage>
        <taxon>Bacteria</taxon>
        <taxon>Bacillati</taxon>
        <taxon>Bacillota</taxon>
        <taxon>Bacilli</taxon>
        <taxon>Bacillales</taxon>
        <taxon>Bacillaceae</taxon>
        <taxon>Bacillus</taxon>
        <taxon>Bacillus cereus group</taxon>
    </lineage>
</organism>
<keyword id="KW-0028">Amino-acid biosynthesis</keyword>
<keyword id="KW-0067">ATP-binding</keyword>
<keyword id="KW-0963">Cytoplasm</keyword>
<keyword id="KW-0368">Histidine biosynthesis</keyword>
<keyword id="KW-0378">Hydrolase</keyword>
<keyword id="KW-0547">Nucleotide-binding</keyword>